<protein>
    <recommendedName>
        <fullName>Mas-related G-protein coupled receptor member A4</fullName>
    </recommendedName>
    <alternativeName>
        <fullName>RF-amide G-protein coupled receptor</fullName>
    </alternativeName>
</protein>
<comment type="function">
    <text>Orphan receptor. May be a receptor for RFamide-family neuropeptides such as NPFF and NPAF, which are analgesic in vivo. May regulate nociceptor function and/or development, including the sensation or modulation of pain.</text>
</comment>
<comment type="subcellular location">
    <subcellularLocation>
        <location evidence="3">Cell membrane</location>
        <topology evidence="3">Multi-pass membrane protein</topology>
    </subcellularLocation>
</comment>
<comment type="tissue specificity">
    <text evidence="3">Expressed in a subset of sensory neurons that includes nociceptors. Expressed in the subclass of non-peptidergic sensory neurons that are IB4(+) and VR1(-).</text>
</comment>
<comment type="similarity">
    <text evidence="2">Belongs to the G-protein coupled receptor 1 family. Mas subfamily.</text>
</comment>
<proteinExistence type="evidence at transcript level"/>
<name>MRGA4_MOUSE</name>
<reference key="1">
    <citation type="journal article" date="2001" name="Cell">
        <title>A diverse family of GPCRs expressed in specific subsets of nociceptive sensory neurons.</title>
        <authorList>
            <person name="Dong X."/>
            <person name="Han S.-K."/>
            <person name="Zylka M.J."/>
            <person name="Simon M.I."/>
            <person name="Anderson D.J."/>
        </authorList>
    </citation>
    <scope>NUCLEOTIDE SEQUENCE [MRNA]</scope>
    <scope>SUBCELLULAR LOCATION</scope>
    <scope>TISSUE SPECIFICITY</scope>
    <source>
        <strain>C57BL/6J</strain>
        <tissue>Spinal ganglion</tissue>
    </source>
</reference>
<reference key="2">
    <citation type="journal article" date="2009" name="PLoS Biol.">
        <title>Lineage-specific biology revealed by a finished genome assembly of the mouse.</title>
        <authorList>
            <person name="Church D.M."/>
            <person name="Goodstadt L."/>
            <person name="Hillier L.W."/>
            <person name="Zody M.C."/>
            <person name="Goldstein S."/>
            <person name="She X."/>
            <person name="Bult C.J."/>
            <person name="Agarwala R."/>
            <person name="Cherry J.L."/>
            <person name="DiCuccio M."/>
            <person name="Hlavina W."/>
            <person name="Kapustin Y."/>
            <person name="Meric P."/>
            <person name="Maglott D."/>
            <person name="Birtle Z."/>
            <person name="Marques A.C."/>
            <person name="Graves T."/>
            <person name="Zhou S."/>
            <person name="Teague B."/>
            <person name="Potamousis K."/>
            <person name="Churas C."/>
            <person name="Place M."/>
            <person name="Herschleb J."/>
            <person name="Runnheim R."/>
            <person name="Forrest D."/>
            <person name="Amos-Landgraf J."/>
            <person name="Schwartz D.C."/>
            <person name="Cheng Z."/>
            <person name="Lindblad-Toh K."/>
            <person name="Eichler E.E."/>
            <person name="Ponting C.P."/>
        </authorList>
    </citation>
    <scope>NUCLEOTIDE SEQUENCE [LARGE SCALE GENOMIC DNA]</scope>
    <source>
        <strain>C57BL/6J</strain>
    </source>
</reference>
<reference key="3">
    <citation type="submission" date="2005-07" db="EMBL/GenBank/DDBJ databases">
        <authorList>
            <person name="Mural R.J."/>
            <person name="Adams M.D."/>
            <person name="Myers E.W."/>
            <person name="Smith H.O."/>
            <person name="Venter J.C."/>
        </authorList>
    </citation>
    <scope>NUCLEOTIDE SEQUENCE [LARGE SCALE GENOMIC DNA]</scope>
</reference>
<reference key="4">
    <citation type="journal article" date="2004" name="Genome Res.">
        <title>The status, quality, and expansion of the NIH full-length cDNA project: the Mammalian Gene Collection (MGC).</title>
        <authorList>
            <consortium name="The MGC Project Team"/>
        </authorList>
    </citation>
    <scope>NUCLEOTIDE SEQUENCE [LARGE SCALE MRNA]</scope>
</reference>
<gene>
    <name type="primary">Mrgpra4</name>
    <name type="synonym">Mrga4</name>
</gene>
<accession>Q91WW2</accession>
<accession>Q1RLL1</accession>
<feature type="chain" id="PRO_0000069750" description="Mas-related G-protein coupled receptor member A4">
    <location>
        <begin position="1"/>
        <end position="313"/>
    </location>
</feature>
<feature type="topological domain" description="Extracellular" evidence="1">
    <location>
        <begin position="1"/>
        <end position="25"/>
    </location>
</feature>
<feature type="transmembrane region" description="Helical; Name=1" evidence="1">
    <location>
        <begin position="26"/>
        <end position="46"/>
    </location>
</feature>
<feature type="topological domain" description="Cytoplasmic" evidence="1">
    <location>
        <begin position="47"/>
        <end position="54"/>
    </location>
</feature>
<feature type="transmembrane region" description="Helical; Name=2" evidence="1">
    <location>
        <begin position="55"/>
        <end position="75"/>
    </location>
</feature>
<feature type="topological domain" description="Extracellular" evidence="1">
    <location>
        <begin position="76"/>
        <end position="93"/>
    </location>
</feature>
<feature type="transmembrane region" description="Helical; Name=3" evidence="1">
    <location>
        <begin position="94"/>
        <end position="114"/>
    </location>
</feature>
<feature type="topological domain" description="Cytoplasmic" evidence="1">
    <location>
        <begin position="115"/>
        <end position="137"/>
    </location>
</feature>
<feature type="transmembrane region" description="Helical; Name=4" evidence="1">
    <location>
        <begin position="138"/>
        <end position="158"/>
    </location>
</feature>
<feature type="topological domain" description="Extracellular" evidence="1">
    <location>
        <begin position="159"/>
        <end position="182"/>
    </location>
</feature>
<feature type="transmembrane region" description="Helical; Name=5" evidence="1">
    <location>
        <begin position="183"/>
        <end position="203"/>
    </location>
</feature>
<feature type="topological domain" description="Cytoplasmic" evidence="1">
    <location>
        <begin position="204"/>
        <end position="219"/>
    </location>
</feature>
<feature type="transmembrane region" description="Helical; Name=6" evidence="1">
    <location>
        <begin position="220"/>
        <end position="240"/>
    </location>
</feature>
<feature type="topological domain" description="Extracellular" evidence="1">
    <location>
        <begin position="241"/>
        <end position="255"/>
    </location>
</feature>
<feature type="transmembrane region" description="Helical; Name=7" evidence="1">
    <location>
        <begin position="256"/>
        <end position="276"/>
    </location>
</feature>
<feature type="topological domain" description="Cytoplasmic" evidence="1">
    <location>
        <begin position="277"/>
        <end position="313"/>
    </location>
</feature>
<feature type="glycosylation site" description="N-linked (GlcNAc...) asparagine" evidence="1">
    <location>
        <position position="10"/>
    </location>
</feature>
<feature type="glycosylation site" description="N-linked (GlcNAc...) asparagine" evidence="1">
    <location>
        <position position="76"/>
    </location>
</feature>
<feature type="sequence conflict" description="In Ref. 1; AAK91790." evidence="4" ref="1">
    <original>A</original>
    <variation>G</variation>
    <location>
        <position position="204"/>
    </location>
</feature>
<organism>
    <name type="scientific">Mus musculus</name>
    <name type="common">Mouse</name>
    <dbReference type="NCBI Taxonomy" id="10090"/>
    <lineage>
        <taxon>Eukaryota</taxon>
        <taxon>Metazoa</taxon>
        <taxon>Chordata</taxon>
        <taxon>Craniata</taxon>
        <taxon>Vertebrata</taxon>
        <taxon>Euteleostomi</taxon>
        <taxon>Mammalia</taxon>
        <taxon>Eutheria</taxon>
        <taxon>Euarchontoglires</taxon>
        <taxon>Glires</taxon>
        <taxon>Rodentia</taxon>
        <taxon>Myomorpha</taxon>
        <taxon>Muroidea</taxon>
        <taxon>Muridae</taxon>
        <taxon>Murinae</taxon>
        <taxon>Mus</taxon>
        <taxon>Mus</taxon>
    </lineage>
</organism>
<dbReference type="EMBL" id="AY042194">
    <property type="protein sequence ID" value="AAK91790.1"/>
    <property type="molecule type" value="mRNA"/>
</dbReference>
<dbReference type="EMBL" id="AC144923">
    <property type="status" value="NOT_ANNOTATED_CDS"/>
    <property type="molecule type" value="Genomic_DNA"/>
</dbReference>
<dbReference type="EMBL" id="CH466603">
    <property type="protein sequence ID" value="EDL22963.1"/>
    <property type="molecule type" value="Genomic_DNA"/>
</dbReference>
<dbReference type="EMBL" id="BC115741">
    <property type="protein sequence ID" value="AAI15742.1"/>
    <property type="molecule type" value="mRNA"/>
</dbReference>
<dbReference type="CCDS" id="CCDS21298.1"/>
<dbReference type="RefSeq" id="NP_705744.2">
    <property type="nucleotide sequence ID" value="NM_153524.2"/>
</dbReference>
<dbReference type="SMR" id="Q91WW2"/>
<dbReference type="FunCoup" id="Q91WW2">
    <property type="interactions" value="39"/>
</dbReference>
<dbReference type="STRING" id="10090.ENSMUSP00000084327"/>
<dbReference type="GlyCosmos" id="Q91WW2">
    <property type="glycosylation" value="2 sites, No reported glycans"/>
</dbReference>
<dbReference type="GlyGen" id="Q91WW2">
    <property type="glycosylation" value="2 sites"/>
</dbReference>
<dbReference type="PaxDb" id="10090-ENSMUSP00000084327"/>
<dbReference type="DNASU" id="235854"/>
<dbReference type="Ensembl" id="ENSMUST00000087092.4">
    <property type="protein sequence ID" value="ENSMUSP00000084327.3"/>
    <property type="gene ID" value="ENSMUSG00000067173.4"/>
</dbReference>
<dbReference type="GeneID" id="235854"/>
<dbReference type="KEGG" id="mmu:235854"/>
<dbReference type="UCSC" id="uc009hak.1">
    <property type="organism name" value="mouse"/>
</dbReference>
<dbReference type="AGR" id="MGI:3033100"/>
<dbReference type="CTD" id="235854"/>
<dbReference type="MGI" id="MGI:3033100">
    <property type="gene designation" value="Mrgpra4"/>
</dbReference>
<dbReference type="VEuPathDB" id="HostDB:ENSMUSG00000067173"/>
<dbReference type="eggNOG" id="ENOG502RTWA">
    <property type="taxonomic scope" value="Eukaryota"/>
</dbReference>
<dbReference type="GeneTree" id="ENSGT01030000234639"/>
<dbReference type="HOGENOM" id="CLU_009579_4_1_1"/>
<dbReference type="InParanoid" id="Q91WW2"/>
<dbReference type="OMA" id="NPMNETI"/>
<dbReference type="OrthoDB" id="6091802at2759"/>
<dbReference type="PhylomeDB" id="Q91WW2"/>
<dbReference type="TreeFam" id="TF336336"/>
<dbReference type="BioGRID-ORCS" id="235854">
    <property type="hits" value="4 hits in 77 CRISPR screens"/>
</dbReference>
<dbReference type="PRO" id="PR:Q91WW2"/>
<dbReference type="Proteomes" id="UP000000589">
    <property type="component" value="Chromosome 7"/>
</dbReference>
<dbReference type="RNAct" id="Q91WW2">
    <property type="molecule type" value="protein"/>
</dbReference>
<dbReference type="ExpressionAtlas" id="Q91WW2">
    <property type="expression patterns" value="differential"/>
</dbReference>
<dbReference type="GO" id="GO:0005886">
    <property type="term" value="C:plasma membrane"/>
    <property type="evidence" value="ECO:0007669"/>
    <property type="project" value="UniProtKB-SubCell"/>
</dbReference>
<dbReference type="GO" id="GO:0008188">
    <property type="term" value="F:neuropeptide receptor activity"/>
    <property type="evidence" value="ECO:0000314"/>
    <property type="project" value="MGI"/>
</dbReference>
<dbReference type="CDD" id="cd15105">
    <property type="entry name" value="7tmA_MrgprA"/>
    <property type="match status" value="1"/>
</dbReference>
<dbReference type="FunFam" id="1.20.1070.10:FF:000140">
    <property type="entry name" value="Mas-related G-protein coupled receptor member X2"/>
    <property type="match status" value="1"/>
</dbReference>
<dbReference type="Gene3D" id="1.20.1070.10">
    <property type="entry name" value="Rhodopsin 7-helix transmembrane proteins"/>
    <property type="match status" value="1"/>
</dbReference>
<dbReference type="InterPro" id="IPR000276">
    <property type="entry name" value="GPCR_Rhodpsn"/>
</dbReference>
<dbReference type="InterPro" id="IPR017452">
    <property type="entry name" value="GPCR_Rhodpsn_7TM"/>
</dbReference>
<dbReference type="InterPro" id="IPR026233">
    <property type="entry name" value="MRGPCRA"/>
</dbReference>
<dbReference type="InterPro" id="IPR026234">
    <property type="entry name" value="MRGPCRFAMILY"/>
</dbReference>
<dbReference type="PANTHER" id="PTHR11334">
    <property type="entry name" value="MAS-RELATED G-PROTEIN COUPLED RECEPTOR"/>
    <property type="match status" value="1"/>
</dbReference>
<dbReference type="PANTHER" id="PTHR11334:SF33">
    <property type="entry name" value="MAS-RELATED GPR, MEMBER A2A-RELATED"/>
    <property type="match status" value="1"/>
</dbReference>
<dbReference type="Pfam" id="PF00001">
    <property type="entry name" value="7tm_1"/>
    <property type="match status" value="1"/>
</dbReference>
<dbReference type="PRINTS" id="PR00237">
    <property type="entry name" value="GPCRRHODOPSN"/>
</dbReference>
<dbReference type="PRINTS" id="PR02109">
    <property type="entry name" value="MRGPCRA"/>
</dbReference>
<dbReference type="PRINTS" id="PR02108">
    <property type="entry name" value="MRGPCRFAMILY"/>
</dbReference>
<dbReference type="SUPFAM" id="SSF81321">
    <property type="entry name" value="Family A G protein-coupled receptor-like"/>
    <property type="match status" value="1"/>
</dbReference>
<dbReference type="PROSITE" id="PS00237">
    <property type="entry name" value="G_PROTEIN_RECEP_F1_1"/>
    <property type="match status" value="1"/>
</dbReference>
<dbReference type="PROSITE" id="PS50262">
    <property type="entry name" value="G_PROTEIN_RECEP_F1_2"/>
    <property type="match status" value="1"/>
</dbReference>
<sequence>MAPTTTNPMNETIPGSIDIETLIPNLMIIIFGLVGLTGNVILFWLLGFHLHRNAFLVYILNLALADFLFLLCHIINSTMLLLKVHLPNNILNHCFDIIMTVLYITGLSMLSAISTERCLSVLCPIWYRCRRPEHTSTVLCAVIWFLPLLICILNGYFCHFFGPKYVIDSVCLATNFFIRTYPMFLFIVLCLSTLALLARLFCGAGKTKFTRLFVTIMLTVLVFLLCGLPLGFFWFLVPWINRDFSVLDYILFQTSLVLTSVNSCANPIIYFFVGSFRHRLKHKTLKMVLQSALQDTPETPENMVEMSRSKAEP</sequence>
<evidence type="ECO:0000255" key="1"/>
<evidence type="ECO:0000255" key="2">
    <source>
        <dbReference type="PROSITE-ProRule" id="PRU00521"/>
    </source>
</evidence>
<evidence type="ECO:0000269" key="3">
    <source>
    </source>
</evidence>
<evidence type="ECO:0000305" key="4"/>
<keyword id="KW-1003">Cell membrane</keyword>
<keyword id="KW-0297">G-protein coupled receptor</keyword>
<keyword id="KW-0325">Glycoprotein</keyword>
<keyword id="KW-0472">Membrane</keyword>
<keyword id="KW-0675">Receptor</keyword>
<keyword id="KW-1185">Reference proteome</keyword>
<keyword id="KW-0807">Transducer</keyword>
<keyword id="KW-0812">Transmembrane</keyword>
<keyword id="KW-1133">Transmembrane helix</keyword>